<reference key="1">
    <citation type="journal article" date="2000" name="Nucleic Acids Res.">
        <title>Complete genome sequence of the alkaliphilic bacterium Bacillus halodurans and genomic sequence comparison with Bacillus subtilis.</title>
        <authorList>
            <person name="Takami H."/>
            <person name="Nakasone K."/>
            <person name="Takaki Y."/>
            <person name="Maeno G."/>
            <person name="Sasaki R."/>
            <person name="Masui N."/>
            <person name="Fuji F."/>
            <person name="Hirama C."/>
            <person name="Nakamura Y."/>
            <person name="Ogasawara N."/>
            <person name="Kuhara S."/>
            <person name="Horikoshi K."/>
        </authorList>
    </citation>
    <scope>NUCLEOTIDE SEQUENCE [LARGE SCALE GENOMIC DNA]</scope>
    <source>
        <strain>ATCC BAA-125 / DSM 18197 / FERM 7344 / JCM 9153 / C-125</strain>
    </source>
</reference>
<evidence type="ECO:0000255" key="1">
    <source>
        <dbReference type="HAMAP-Rule" id="MF_00675"/>
    </source>
</evidence>
<gene>
    <name evidence="1" type="primary">uxaC</name>
    <name type="ordered locus">BH0705</name>
</gene>
<comment type="catalytic activity">
    <reaction evidence="1">
        <text>D-glucuronate = D-fructuronate</text>
        <dbReference type="Rhea" id="RHEA:13049"/>
        <dbReference type="ChEBI" id="CHEBI:58720"/>
        <dbReference type="ChEBI" id="CHEBI:59863"/>
        <dbReference type="EC" id="5.3.1.12"/>
    </reaction>
</comment>
<comment type="catalytic activity">
    <reaction evidence="1">
        <text>aldehydo-D-galacturonate = keto-D-tagaturonate</text>
        <dbReference type="Rhea" id="RHEA:27702"/>
        <dbReference type="ChEBI" id="CHEBI:12952"/>
        <dbReference type="ChEBI" id="CHEBI:17886"/>
        <dbReference type="EC" id="5.3.1.12"/>
    </reaction>
</comment>
<comment type="pathway">
    <text evidence="1">Carbohydrate metabolism; pentose and glucuronate interconversion.</text>
</comment>
<comment type="similarity">
    <text evidence="1">Belongs to the metallo-dependent hydrolases superfamily. Uronate isomerase family.</text>
</comment>
<organism>
    <name type="scientific">Halalkalibacterium halodurans (strain ATCC BAA-125 / DSM 18197 / FERM 7344 / JCM 9153 / C-125)</name>
    <name type="common">Bacillus halodurans</name>
    <dbReference type="NCBI Taxonomy" id="272558"/>
    <lineage>
        <taxon>Bacteria</taxon>
        <taxon>Bacillati</taxon>
        <taxon>Bacillota</taxon>
        <taxon>Bacilli</taxon>
        <taxon>Bacillales</taxon>
        <taxon>Bacillaceae</taxon>
        <taxon>Halalkalibacterium (ex Joshi et al. 2022)</taxon>
    </lineage>
</organism>
<accession>Q9KEZ4</accession>
<keyword id="KW-0413">Isomerase</keyword>
<keyword id="KW-1185">Reference proteome</keyword>
<proteinExistence type="inferred from homology"/>
<sequence length="472" mass="54762">MTNFLSEDFLLMNEYDRELYYTFAKNMPICDYHCHLSPQEIWENKPFENMTKAWLGGDHYKWRAMRLNGVREEFITGGAPDKEKFLAWAKTVPKTIGNPLYHWTHMELKTYFHFHQPLDETNGENVWDACNRLLQQEAFTPRALIERSNVRAIGTTDDPTDSLLYHQKLQADDTFHVKVIPTFRPDGALKIEQDSFADWVAKLSDVTGESLDTLDAFLHALKERLTFFDEHGCRSSDHDMTEVPFVEVNEQEAQHIFRKRLANEGLTKVENEKYKTFLMTWLGKEYAARGWVMQWHIGVMRNNNSRMLHKLGPDTGFDSIGDGQIAHATAKLLDLLDKQGALPKTILYCVNPNANYILASMIGNFTESGVRGKVQFGSAWWFNDHIDGMRRQLTDLASVGLLSNFIGMLTDSRSFLSYPRHDYFRRILCQLIGSWIKEGQLPPDMERWGQIVQDICYNNVVDYFDMKETVRL</sequence>
<feature type="chain" id="PRO_0000172758" description="Uronate isomerase">
    <location>
        <begin position="1"/>
        <end position="472"/>
    </location>
</feature>
<name>UXAC_HALH5</name>
<protein>
    <recommendedName>
        <fullName evidence="1">Uronate isomerase</fullName>
        <ecNumber evidence="1">5.3.1.12</ecNumber>
    </recommendedName>
    <alternativeName>
        <fullName evidence="1">Glucuronate isomerase</fullName>
    </alternativeName>
    <alternativeName>
        <fullName evidence="1">Uronic isomerase</fullName>
    </alternativeName>
</protein>
<dbReference type="EC" id="5.3.1.12" evidence="1"/>
<dbReference type="EMBL" id="BA000004">
    <property type="protein sequence ID" value="BAB04424.1"/>
    <property type="molecule type" value="Genomic_DNA"/>
</dbReference>
<dbReference type="PIR" id="A83738">
    <property type="entry name" value="A83738"/>
</dbReference>
<dbReference type="RefSeq" id="WP_010896878.1">
    <property type="nucleotide sequence ID" value="NC_002570.2"/>
</dbReference>
<dbReference type="SMR" id="Q9KEZ4"/>
<dbReference type="STRING" id="272558.gene:10726579"/>
<dbReference type="KEGG" id="bha:BH0705"/>
<dbReference type="eggNOG" id="COG1904">
    <property type="taxonomic scope" value="Bacteria"/>
</dbReference>
<dbReference type="HOGENOM" id="CLU_044465_1_0_9"/>
<dbReference type="OrthoDB" id="9766564at2"/>
<dbReference type="UniPathway" id="UPA00246"/>
<dbReference type="Proteomes" id="UP000001258">
    <property type="component" value="Chromosome"/>
</dbReference>
<dbReference type="GO" id="GO:0008880">
    <property type="term" value="F:glucuronate isomerase activity"/>
    <property type="evidence" value="ECO:0007669"/>
    <property type="project" value="UniProtKB-UniRule"/>
</dbReference>
<dbReference type="GO" id="GO:0019698">
    <property type="term" value="P:D-galacturonate catabolic process"/>
    <property type="evidence" value="ECO:0007669"/>
    <property type="project" value="TreeGrafter"/>
</dbReference>
<dbReference type="GO" id="GO:0042840">
    <property type="term" value="P:D-glucuronate catabolic process"/>
    <property type="evidence" value="ECO:0007669"/>
    <property type="project" value="TreeGrafter"/>
</dbReference>
<dbReference type="Gene3D" id="3.20.20.140">
    <property type="entry name" value="Metal-dependent hydrolases"/>
    <property type="match status" value="1"/>
</dbReference>
<dbReference type="Gene3D" id="1.10.2020.10">
    <property type="entry name" value="uronate isomerase, domain 2, chain A"/>
    <property type="match status" value="1"/>
</dbReference>
<dbReference type="HAMAP" id="MF_00675">
    <property type="entry name" value="UxaC"/>
    <property type="match status" value="1"/>
</dbReference>
<dbReference type="InterPro" id="IPR032466">
    <property type="entry name" value="Metal_Hydrolase"/>
</dbReference>
<dbReference type="InterPro" id="IPR003766">
    <property type="entry name" value="Uronate_isomerase"/>
</dbReference>
<dbReference type="NCBIfam" id="NF002794">
    <property type="entry name" value="PRK02925.1"/>
    <property type="match status" value="1"/>
</dbReference>
<dbReference type="PANTHER" id="PTHR30068">
    <property type="entry name" value="URONATE ISOMERASE"/>
    <property type="match status" value="1"/>
</dbReference>
<dbReference type="PANTHER" id="PTHR30068:SF4">
    <property type="entry name" value="URONATE ISOMERASE"/>
    <property type="match status" value="1"/>
</dbReference>
<dbReference type="Pfam" id="PF02614">
    <property type="entry name" value="UxaC"/>
    <property type="match status" value="1"/>
</dbReference>
<dbReference type="SUPFAM" id="SSF51556">
    <property type="entry name" value="Metallo-dependent hydrolases"/>
    <property type="match status" value="1"/>
</dbReference>